<feature type="chain" id="PRO_0000418293" description="Uncharacterized protein US12">
    <location>
        <begin position="1"/>
        <end position="281"/>
    </location>
</feature>
<feature type="transmembrane region" description="Helical" evidence="1">
    <location>
        <begin position="58"/>
        <end position="78"/>
    </location>
</feature>
<feature type="transmembrane region" description="Helical" evidence="1">
    <location>
        <begin position="88"/>
        <end position="107"/>
    </location>
</feature>
<feature type="transmembrane region" description="Helical" evidence="1">
    <location>
        <begin position="117"/>
        <end position="137"/>
    </location>
</feature>
<feature type="transmembrane region" description="Helical" evidence="1">
    <location>
        <begin position="145"/>
        <end position="165"/>
    </location>
</feature>
<feature type="transmembrane region" description="Helical" evidence="1">
    <location>
        <begin position="171"/>
        <end position="191"/>
    </location>
</feature>
<feature type="transmembrane region" description="Helical" evidence="1">
    <location>
        <begin position="196"/>
        <end position="216"/>
    </location>
</feature>
<feature type="transmembrane region" description="Helical" evidence="1">
    <location>
        <begin position="248"/>
        <end position="268"/>
    </location>
</feature>
<feature type="region of interest" description="Disordered" evidence="2">
    <location>
        <begin position="1"/>
        <end position="30"/>
    </location>
</feature>
<feature type="compositionally biased region" description="Pro residues" evidence="2">
    <location>
        <begin position="20"/>
        <end position="30"/>
    </location>
</feature>
<sequence length="281" mass="32471">MVQIQFHQGEPLGHKKEKPPPVSPPSPPPIRRVTVITKDEDTLRSVQHFLWMVRLYGTVVFQTSATIATTILFMLIPWRVTTPYLRDTLPFWSTLLPCALRCHAYWLERQRRPGTLMLVMVYTTLTTISVSTIGLCFDRTVVIQAYVLSSMLCVWCTGLAWLMAWNMQRRLAILCLLSFMLPILWLFIAVQSWEPYQRIILALTVSFIYGLKIVLIRDTLTVLYRSPSNCYTDGDLLRTAMLLYMDQVIMFLLVVVPLTAPIWYPNYAGALGRTAHWLFHK</sequence>
<keyword id="KW-1043">Host membrane</keyword>
<keyword id="KW-0472">Membrane</keyword>
<keyword id="KW-1185">Reference proteome</keyword>
<keyword id="KW-0812">Transmembrane</keyword>
<keyword id="KW-1133">Transmembrane helix</keyword>
<dbReference type="EMBL" id="AY446894">
    <property type="protein sequence ID" value="AAR31701.1"/>
    <property type="molecule type" value="Genomic_DNA"/>
</dbReference>
<dbReference type="RefSeq" id="YP_081597.1">
    <property type="nucleotide sequence ID" value="NC_006273.2"/>
</dbReference>
<dbReference type="DNASU" id="3077562"/>
<dbReference type="GeneID" id="3077562"/>
<dbReference type="KEGG" id="vg:3077562"/>
<dbReference type="Reactome" id="R-HSA-9609690">
    <property type="pathway name" value="HCMV Early Events"/>
</dbReference>
<dbReference type="Proteomes" id="UP000000938">
    <property type="component" value="Segment"/>
</dbReference>
<dbReference type="GO" id="GO:0033644">
    <property type="term" value="C:host cell membrane"/>
    <property type="evidence" value="ECO:0007669"/>
    <property type="project" value="UniProtKB-SubCell"/>
</dbReference>
<dbReference type="GO" id="GO:0016020">
    <property type="term" value="C:membrane"/>
    <property type="evidence" value="ECO:0007669"/>
    <property type="project" value="UniProtKB-KW"/>
</dbReference>
<dbReference type="InterPro" id="IPR006214">
    <property type="entry name" value="Bax_inhibitor_1-related"/>
</dbReference>
<dbReference type="Pfam" id="PF01027">
    <property type="entry name" value="Bax1-I"/>
    <property type="match status" value="1"/>
</dbReference>
<name>US12_HCMVM</name>
<evidence type="ECO:0000255" key="1"/>
<evidence type="ECO:0000256" key="2">
    <source>
        <dbReference type="SAM" id="MobiDB-lite"/>
    </source>
</evidence>
<evidence type="ECO:0000305" key="3"/>
<organismHost>
    <name type="scientific">Homo sapiens</name>
    <name type="common">Human</name>
    <dbReference type="NCBI Taxonomy" id="9606"/>
</organismHost>
<organism>
    <name type="scientific">Human cytomegalovirus (strain Merlin)</name>
    <name type="common">HHV-5</name>
    <name type="synonym">Human herpesvirus 5</name>
    <dbReference type="NCBI Taxonomy" id="295027"/>
    <lineage>
        <taxon>Viruses</taxon>
        <taxon>Duplodnaviria</taxon>
        <taxon>Heunggongvirae</taxon>
        <taxon>Peploviricota</taxon>
        <taxon>Herviviricetes</taxon>
        <taxon>Herpesvirales</taxon>
        <taxon>Orthoherpesviridae</taxon>
        <taxon>Betaherpesvirinae</taxon>
        <taxon>Cytomegalovirus</taxon>
        <taxon>Cytomegalovirus humanbeta5</taxon>
        <taxon>Human cytomegalovirus</taxon>
    </lineage>
</organism>
<reference key="1">
    <citation type="journal article" date="2004" name="J. Gen. Virol.">
        <title>Genetic content of wild-type human cytomegalovirus.</title>
        <authorList>
            <person name="Dolan A."/>
            <person name="Cunningham C."/>
            <person name="Hector R.D."/>
            <person name="Hassan-Walker A.F."/>
            <person name="Lee L."/>
            <person name="Addison C."/>
            <person name="Dargan D.J."/>
            <person name="McGeoch D.J."/>
            <person name="Gatherer D."/>
            <person name="Emery V.C."/>
            <person name="Griffiths P.D."/>
            <person name="Sinzger C."/>
            <person name="McSharry B.P."/>
            <person name="Wilkinson G.W.G."/>
            <person name="Davison A.J."/>
        </authorList>
    </citation>
    <scope>NUCLEOTIDE SEQUENCE [LARGE SCALE GENOMIC DNA]</scope>
</reference>
<protein>
    <recommendedName>
        <fullName>Uncharacterized protein US12</fullName>
    </recommendedName>
</protein>
<accession>F5HE44</accession>
<comment type="subcellular location">
    <subcellularLocation>
        <location evidence="3">Host membrane</location>
        <topology evidence="3">Multi-pass membrane protein</topology>
    </subcellularLocation>
</comment>
<comment type="similarity">
    <text evidence="3">Belongs to the cytomegalovirus US12 family.</text>
</comment>
<proteinExistence type="inferred from homology"/>
<gene>
    <name type="primary">US12</name>
</gene>